<accession>Q1LS75</accession>
<proteinExistence type="inferred from homology"/>
<organism>
    <name type="scientific">Cupriavidus metallidurans (strain ATCC 43123 / DSM 2839 / NBRC 102507 / CH34)</name>
    <name type="common">Ralstonia metallidurans</name>
    <dbReference type="NCBI Taxonomy" id="266264"/>
    <lineage>
        <taxon>Bacteria</taxon>
        <taxon>Pseudomonadati</taxon>
        <taxon>Pseudomonadota</taxon>
        <taxon>Betaproteobacteria</taxon>
        <taxon>Burkholderiales</taxon>
        <taxon>Burkholderiaceae</taxon>
        <taxon>Cupriavidus</taxon>
    </lineage>
</organism>
<evidence type="ECO:0000255" key="1">
    <source>
        <dbReference type="HAMAP-Rule" id="MF_01693"/>
    </source>
</evidence>
<name>BIOF_CUPMC</name>
<reference key="1">
    <citation type="journal article" date="2010" name="PLoS ONE">
        <title>The complete genome sequence of Cupriavidus metallidurans strain CH34, a master survivalist in harsh and anthropogenic environments.</title>
        <authorList>
            <person name="Janssen P.J."/>
            <person name="Van Houdt R."/>
            <person name="Moors H."/>
            <person name="Monsieurs P."/>
            <person name="Morin N."/>
            <person name="Michaux A."/>
            <person name="Benotmane M.A."/>
            <person name="Leys N."/>
            <person name="Vallaeys T."/>
            <person name="Lapidus A."/>
            <person name="Monchy S."/>
            <person name="Medigue C."/>
            <person name="Taghavi S."/>
            <person name="McCorkle S."/>
            <person name="Dunn J."/>
            <person name="van der Lelie D."/>
            <person name="Mergeay M."/>
        </authorList>
    </citation>
    <scope>NUCLEOTIDE SEQUENCE [LARGE SCALE GENOMIC DNA]</scope>
    <source>
        <strain>ATCC 43123 / DSM 2839 / NBRC 102507 / CH34</strain>
    </source>
</reference>
<comment type="function">
    <text evidence="1">Catalyzes the decarboxylative condensation of pimeloyl-[acyl-carrier protein] and L-alanine to produce 8-amino-7-oxononanoate (AON), [acyl-carrier protein], and carbon dioxide.</text>
</comment>
<comment type="catalytic activity">
    <reaction evidence="1">
        <text>6-carboxyhexanoyl-[ACP] + L-alanine + H(+) = (8S)-8-amino-7-oxononanoate + holo-[ACP] + CO2</text>
        <dbReference type="Rhea" id="RHEA:42288"/>
        <dbReference type="Rhea" id="RHEA-COMP:9685"/>
        <dbReference type="Rhea" id="RHEA-COMP:9955"/>
        <dbReference type="ChEBI" id="CHEBI:15378"/>
        <dbReference type="ChEBI" id="CHEBI:16526"/>
        <dbReference type="ChEBI" id="CHEBI:57972"/>
        <dbReference type="ChEBI" id="CHEBI:64479"/>
        <dbReference type="ChEBI" id="CHEBI:78846"/>
        <dbReference type="ChEBI" id="CHEBI:149468"/>
        <dbReference type="EC" id="2.3.1.47"/>
    </reaction>
</comment>
<comment type="cofactor">
    <cofactor evidence="1">
        <name>pyridoxal 5'-phosphate</name>
        <dbReference type="ChEBI" id="CHEBI:597326"/>
    </cofactor>
</comment>
<comment type="pathway">
    <text evidence="1">Cofactor biosynthesis; biotin biosynthesis.</text>
</comment>
<comment type="subunit">
    <text evidence="1">Homodimer.</text>
</comment>
<comment type="similarity">
    <text evidence="1">Belongs to the class-II pyridoxal-phosphate-dependent aminotransferase family. BioF subfamily.</text>
</comment>
<sequence>MLLDHLKRAAAERDAQSLTRRRRIAHTACAPHQSVGGIDATPTPLLTFCSNDYLGLANHGSIAHALAEGAHRYGAGSGASHLVSGHSLAHAQLERELARWLAPYIPQAQALYFCTGYMANLAVLTSLGATGATLFCESLNHASLIDGARLARADVQRYPHGDAGALDALLAASTTALKLIVTDSVFSMDGDIAPLAALLEVAERHDAWIIVDDAHGFGVLGENGHGVLEHLGLRSERLIYIGTLGKAAGVAGAFVAAHETIVEHLINTARPYIYTTAAPPAVAHALLTSLEIIAGEEGRSRRAHLTGLIAQLRAGLAVLAAQAGWSLGESETAIQPLIVGDNAAALALSAALEAEGIRVGAIRPPTVPAGTARLRITLSASHSAADVARLLETIARAAPQLHKEAA</sequence>
<gene>
    <name evidence="1" type="primary">bioF</name>
    <name type="ordered locus">Rmet_0115</name>
</gene>
<feature type="chain" id="PRO_0000381088" description="8-amino-7-oxononanoate synthase">
    <location>
        <begin position="1"/>
        <end position="406"/>
    </location>
</feature>
<feature type="binding site" evidence="1">
    <location>
        <position position="20"/>
    </location>
    <ligand>
        <name>substrate</name>
    </ligand>
</feature>
<feature type="binding site" evidence="1">
    <location>
        <begin position="116"/>
        <end position="117"/>
    </location>
    <ligand>
        <name>pyridoxal 5'-phosphate</name>
        <dbReference type="ChEBI" id="CHEBI:597326"/>
    </ligand>
</feature>
<feature type="binding site" evidence="1">
    <location>
        <position position="141"/>
    </location>
    <ligand>
        <name>substrate</name>
    </ligand>
</feature>
<feature type="binding site" evidence="1">
    <location>
        <position position="187"/>
    </location>
    <ligand>
        <name>pyridoxal 5'-phosphate</name>
        <dbReference type="ChEBI" id="CHEBI:597326"/>
    </ligand>
</feature>
<feature type="binding site" evidence="1">
    <location>
        <position position="215"/>
    </location>
    <ligand>
        <name>pyridoxal 5'-phosphate</name>
        <dbReference type="ChEBI" id="CHEBI:597326"/>
    </ligand>
</feature>
<feature type="binding site" evidence="1">
    <location>
        <position position="243"/>
    </location>
    <ligand>
        <name>pyridoxal 5'-phosphate</name>
        <dbReference type="ChEBI" id="CHEBI:597326"/>
    </ligand>
</feature>
<feature type="binding site" evidence="1">
    <location>
        <position position="366"/>
    </location>
    <ligand>
        <name>substrate</name>
    </ligand>
</feature>
<feature type="modified residue" description="N6-(pyridoxal phosphate)lysine" evidence="1">
    <location>
        <position position="246"/>
    </location>
</feature>
<dbReference type="EC" id="2.3.1.47" evidence="1"/>
<dbReference type="EMBL" id="CP000352">
    <property type="protein sequence ID" value="ABF07001.1"/>
    <property type="molecule type" value="Genomic_DNA"/>
</dbReference>
<dbReference type="RefSeq" id="WP_011515035.1">
    <property type="nucleotide sequence ID" value="NC_007973.1"/>
</dbReference>
<dbReference type="SMR" id="Q1LS75"/>
<dbReference type="STRING" id="266264.Rmet_0115"/>
<dbReference type="KEGG" id="rme:Rmet_0115"/>
<dbReference type="eggNOG" id="COG0156">
    <property type="taxonomic scope" value="Bacteria"/>
</dbReference>
<dbReference type="HOGENOM" id="CLU_015846_11_2_4"/>
<dbReference type="UniPathway" id="UPA00078"/>
<dbReference type="Proteomes" id="UP000002429">
    <property type="component" value="Chromosome"/>
</dbReference>
<dbReference type="GO" id="GO:0008710">
    <property type="term" value="F:8-amino-7-oxononanoate synthase activity"/>
    <property type="evidence" value="ECO:0007669"/>
    <property type="project" value="UniProtKB-UniRule"/>
</dbReference>
<dbReference type="GO" id="GO:0030170">
    <property type="term" value="F:pyridoxal phosphate binding"/>
    <property type="evidence" value="ECO:0007669"/>
    <property type="project" value="UniProtKB-UniRule"/>
</dbReference>
<dbReference type="GO" id="GO:0009102">
    <property type="term" value="P:biotin biosynthetic process"/>
    <property type="evidence" value="ECO:0007669"/>
    <property type="project" value="UniProtKB-UniRule"/>
</dbReference>
<dbReference type="Gene3D" id="3.90.1150.10">
    <property type="entry name" value="Aspartate Aminotransferase, domain 1"/>
    <property type="match status" value="1"/>
</dbReference>
<dbReference type="Gene3D" id="3.40.640.10">
    <property type="entry name" value="Type I PLP-dependent aspartate aminotransferase-like (Major domain)"/>
    <property type="match status" value="1"/>
</dbReference>
<dbReference type="HAMAP" id="MF_01693">
    <property type="entry name" value="BioF_aminotrans_2"/>
    <property type="match status" value="1"/>
</dbReference>
<dbReference type="InterPro" id="IPR004839">
    <property type="entry name" value="Aminotransferase_I/II_large"/>
</dbReference>
<dbReference type="InterPro" id="IPR050087">
    <property type="entry name" value="AON_synthase_class-II"/>
</dbReference>
<dbReference type="InterPro" id="IPR004723">
    <property type="entry name" value="AONS_Archaea/Proteobacteria"/>
</dbReference>
<dbReference type="InterPro" id="IPR022834">
    <property type="entry name" value="AONS_Proteobacteria"/>
</dbReference>
<dbReference type="InterPro" id="IPR015424">
    <property type="entry name" value="PyrdxlP-dep_Trfase"/>
</dbReference>
<dbReference type="InterPro" id="IPR015421">
    <property type="entry name" value="PyrdxlP-dep_Trfase_major"/>
</dbReference>
<dbReference type="InterPro" id="IPR015422">
    <property type="entry name" value="PyrdxlP-dep_Trfase_small"/>
</dbReference>
<dbReference type="NCBIfam" id="TIGR00858">
    <property type="entry name" value="bioF"/>
    <property type="match status" value="1"/>
</dbReference>
<dbReference type="PANTHER" id="PTHR13693:SF100">
    <property type="entry name" value="8-AMINO-7-OXONONANOATE SYNTHASE"/>
    <property type="match status" value="1"/>
</dbReference>
<dbReference type="PANTHER" id="PTHR13693">
    <property type="entry name" value="CLASS II AMINOTRANSFERASE/8-AMINO-7-OXONONANOATE SYNTHASE"/>
    <property type="match status" value="1"/>
</dbReference>
<dbReference type="Pfam" id="PF00155">
    <property type="entry name" value="Aminotran_1_2"/>
    <property type="match status" value="1"/>
</dbReference>
<dbReference type="SUPFAM" id="SSF53383">
    <property type="entry name" value="PLP-dependent transferases"/>
    <property type="match status" value="1"/>
</dbReference>
<protein>
    <recommendedName>
        <fullName evidence="1">8-amino-7-oxononanoate synthase</fullName>
        <shortName evidence="1">AONS</shortName>
        <ecNumber evidence="1">2.3.1.47</ecNumber>
    </recommendedName>
    <alternativeName>
        <fullName evidence="1">7-keto-8-amino-pelargonic acid synthase</fullName>
        <shortName evidence="1">7-KAP synthase</shortName>
        <shortName evidence="1">KAPA synthase</shortName>
    </alternativeName>
    <alternativeName>
        <fullName evidence="1">8-amino-7-ketopelargonate synthase</fullName>
    </alternativeName>
</protein>
<keyword id="KW-0093">Biotin biosynthesis</keyword>
<keyword id="KW-0663">Pyridoxal phosphate</keyword>
<keyword id="KW-1185">Reference proteome</keyword>
<keyword id="KW-0808">Transferase</keyword>